<evidence type="ECO:0000255" key="1">
    <source>
        <dbReference type="HAMAP-Rule" id="MF_01616"/>
    </source>
</evidence>
<organism>
    <name type="scientific">Serratia proteamaculans (strain 568)</name>
    <dbReference type="NCBI Taxonomy" id="399741"/>
    <lineage>
        <taxon>Bacteria</taxon>
        <taxon>Pseudomonadati</taxon>
        <taxon>Pseudomonadota</taxon>
        <taxon>Gammaproteobacteria</taxon>
        <taxon>Enterobacterales</taxon>
        <taxon>Yersiniaceae</taxon>
        <taxon>Serratia</taxon>
    </lineage>
</organism>
<reference key="1">
    <citation type="submission" date="2007-09" db="EMBL/GenBank/DDBJ databases">
        <title>Complete sequence of chromosome of Serratia proteamaculans 568.</title>
        <authorList>
            <consortium name="US DOE Joint Genome Institute"/>
            <person name="Copeland A."/>
            <person name="Lucas S."/>
            <person name="Lapidus A."/>
            <person name="Barry K."/>
            <person name="Glavina del Rio T."/>
            <person name="Dalin E."/>
            <person name="Tice H."/>
            <person name="Pitluck S."/>
            <person name="Chain P."/>
            <person name="Malfatti S."/>
            <person name="Shin M."/>
            <person name="Vergez L."/>
            <person name="Schmutz J."/>
            <person name="Larimer F."/>
            <person name="Land M."/>
            <person name="Hauser L."/>
            <person name="Kyrpides N."/>
            <person name="Kim E."/>
            <person name="Taghavi S."/>
            <person name="Newman L."/>
            <person name="Vangronsveld J."/>
            <person name="van der Lelie D."/>
            <person name="Richardson P."/>
        </authorList>
    </citation>
    <scope>NUCLEOTIDE SEQUENCE [LARGE SCALE GENOMIC DNA]</scope>
    <source>
        <strain>568</strain>
    </source>
</reference>
<comment type="function">
    <text evidence="1">Murein-degrading enzyme. May play a role in recycling of muropeptides during cell elongation and/or cell division.</text>
</comment>
<comment type="catalytic activity">
    <reaction evidence="1">
        <text>Exolytic cleavage of the (1-&gt;4)-beta-glycosidic linkage between N-acetylmuramic acid (MurNAc) and N-acetylglucosamine (GlcNAc) residues in peptidoglycan, from either the reducing or the non-reducing ends of the peptidoglycan chains, with concomitant formation of a 1,6-anhydrobond in the MurNAc residue.</text>
        <dbReference type="EC" id="4.2.2.n1"/>
    </reaction>
</comment>
<comment type="subcellular location">
    <subcellularLocation>
        <location evidence="1">Cell outer membrane</location>
        <topology evidence="1">Lipid-anchor</topology>
    </subcellularLocation>
</comment>
<comment type="similarity">
    <text evidence="1">Belongs to the transglycosylase Slt family.</text>
</comment>
<sequence length="358" mass="39925">MKKILALLVIAPLLISCSGKKNTEVNEALVKDTNGFEILMGQFAHNIENIWGLNEVLIAGPKDYVKYTDQYQTRSHINFDSGAITIETIATTDPAAHLRQAIISTLLMGDDPGSIDLYSDVNDIQISKEPFLYGQVLDNKGAPIRWEWRAAHFADYLVQTKLQKRTSGLHVIYSVTIQLVPNHLDKRAHKYLPMVRKASEKYGVEESLILAIMQTESSFNPYAVSGSDALGLMQVVQHTAGKDVFQMRGKWGKPSRSYLFDPENNIDTGTAYLAILQNNYLGGIQNPTSRRYAVITAYNGGAGSVLRVFSSDRTRAVGIINGMQPGDVYQTLTTKHPASESRHYLVKVNNAQKSYRRR</sequence>
<dbReference type="EC" id="4.2.2.n1" evidence="1"/>
<dbReference type="EMBL" id="CP000826">
    <property type="protein sequence ID" value="ABV43140.1"/>
    <property type="molecule type" value="Genomic_DNA"/>
</dbReference>
<dbReference type="SMR" id="A8GJ50"/>
<dbReference type="STRING" id="399741.Spro_4045"/>
<dbReference type="CAZy" id="GH23">
    <property type="family name" value="Glycoside Hydrolase Family 23"/>
</dbReference>
<dbReference type="KEGG" id="spe:Spro_4045"/>
<dbReference type="eggNOG" id="COG0741">
    <property type="taxonomic scope" value="Bacteria"/>
</dbReference>
<dbReference type="HOGENOM" id="CLU_044583_0_0_6"/>
<dbReference type="OrthoDB" id="5620293at2"/>
<dbReference type="GO" id="GO:0009279">
    <property type="term" value="C:cell outer membrane"/>
    <property type="evidence" value="ECO:0007669"/>
    <property type="project" value="UniProtKB-SubCell"/>
</dbReference>
<dbReference type="GO" id="GO:0016798">
    <property type="term" value="F:hydrolase activity, acting on glycosyl bonds"/>
    <property type="evidence" value="ECO:0007669"/>
    <property type="project" value="InterPro"/>
</dbReference>
<dbReference type="GO" id="GO:0008933">
    <property type="term" value="F:peptidoglycan lytic transglycosylase activity"/>
    <property type="evidence" value="ECO:0007669"/>
    <property type="project" value="UniProtKB-UniRule"/>
</dbReference>
<dbReference type="GO" id="GO:0016998">
    <property type="term" value="P:cell wall macromolecule catabolic process"/>
    <property type="evidence" value="ECO:0007669"/>
    <property type="project" value="UniProtKB-UniRule"/>
</dbReference>
<dbReference type="GO" id="GO:0071555">
    <property type="term" value="P:cell wall organization"/>
    <property type="evidence" value="ECO:0007669"/>
    <property type="project" value="UniProtKB-KW"/>
</dbReference>
<dbReference type="GO" id="GO:0000270">
    <property type="term" value="P:peptidoglycan metabolic process"/>
    <property type="evidence" value="ECO:0007669"/>
    <property type="project" value="InterPro"/>
</dbReference>
<dbReference type="CDD" id="cd16893">
    <property type="entry name" value="LT_MltC_MltE"/>
    <property type="match status" value="1"/>
</dbReference>
<dbReference type="FunFam" id="1.10.530.10:FF:000002">
    <property type="entry name" value="Membrane-bound lytic murein transglycosylase C"/>
    <property type="match status" value="1"/>
</dbReference>
<dbReference type="Gene3D" id="1.10.530.10">
    <property type="match status" value="1"/>
</dbReference>
<dbReference type="HAMAP" id="MF_01616">
    <property type="entry name" value="MltC"/>
    <property type="match status" value="1"/>
</dbReference>
<dbReference type="InterPro" id="IPR023346">
    <property type="entry name" value="Lysozyme-like_dom_sf"/>
</dbReference>
<dbReference type="InterPro" id="IPR023664">
    <property type="entry name" value="Murein_transglycosylaseC"/>
</dbReference>
<dbReference type="InterPro" id="IPR024570">
    <property type="entry name" value="Murein_transglycosylaseC_N"/>
</dbReference>
<dbReference type="InterPro" id="IPR000189">
    <property type="entry name" value="Transglyc_AS"/>
</dbReference>
<dbReference type="InterPro" id="IPR008258">
    <property type="entry name" value="Transglycosylase_SLT_dom_1"/>
</dbReference>
<dbReference type="NCBIfam" id="NF008670">
    <property type="entry name" value="PRK11671.1"/>
    <property type="match status" value="1"/>
</dbReference>
<dbReference type="PANTHER" id="PTHR37423:SF2">
    <property type="entry name" value="MEMBRANE-BOUND LYTIC MUREIN TRANSGLYCOSYLASE C"/>
    <property type="match status" value="1"/>
</dbReference>
<dbReference type="PANTHER" id="PTHR37423">
    <property type="entry name" value="SOLUBLE LYTIC MUREIN TRANSGLYCOSYLASE-RELATED"/>
    <property type="match status" value="1"/>
</dbReference>
<dbReference type="Pfam" id="PF11873">
    <property type="entry name" value="Mltc_N"/>
    <property type="match status" value="1"/>
</dbReference>
<dbReference type="Pfam" id="PF01464">
    <property type="entry name" value="SLT"/>
    <property type="match status" value="1"/>
</dbReference>
<dbReference type="SUPFAM" id="SSF53955">
    <property type="entry name" value="Lysozyme-like"/>
    <property type="match status" value="1"/>
</dbReference>
<dbReference type="PROSITE" id="PS51257">
    <property type="entry name" value="PROKAR_LIPOPROTEIN"/>
    <property type="match status" value="1"/>
</dbReference>
<dbReference type="PROSITE" id="PS00922">
    <property type="entry name" value="TRANSGLYCOSYLASE"/>
    <property type="match status" value="1"/>
</dbReference>
<name>MLTC_SERP5</name>
<feature type="signal peptide" evidence="1">
    <location>
        <begin position="1"/>
        <end position="16"/>
    </location>
</feature>
<feature type="chain" id="PRO_1000069479" description="Membrane-bound lytic murein transglycosylase C">
    <location>
        <begin position="17"/>
        <end position="358"/>
    </location>
</feature>
<feature type="lipid moiety-binding region" description="N-palmitoyl cysteine" evidence="1">
    <location>
        <position position="17"/>
    </location>
</feature>
<feature type="lipid moiety-binding region" description="S-diacylglycerol cysteine" evidence="1">
    <location>
        <position position="17"/>
    </location>
</feature>
<gene>
    <name evidence="1" type="primary">mltC</name>
    <name type="ordered locus">Spro_4045</name>
</gene>
<keyword id="KW-0998">Cell outer membrane</keyword>
<keyword id="KW-0961">Cell wall biogenesis/degradation</keyword>
<keyword id="KW-0449">Lipoprotein</keyword>
<keyword id="KW-0456">Lyase</keyword>
<keyword id="KW-0472">Membrane</keyword>
<keyword id="KW-0564">Palmitate</keyword>
<keyword id="KW-0732">Signal</keyword>
<accession>A8GJ50</accession>
<protein>
    <recommendedName>
        <fullName evidence="1">Membrane-bound lytic murein transglycosylase C</fullName>
        <ecNumber evidence="1">4.2.2.n1</ecNumber>
    </recommendedName>
    <alternativeName>
        <fullName evidence="1">Murein lyase C</fullName>
    </alternativeName>
</protein>
<proteinExistence type="inferred from homology"/>